<proteinExistence type="inferred from homology"/>
<organism>
    <name type="scientific">Stenotrophomonas maltophilia (strain R551-3)</name>
    <dbReference type="NCBI Taxonomy" id="391008"/>
    <lineage>
        <taxon>Bacteria</taxon>
        <taxon>Pseudomonadati</taxon>
        <taxon>Pseudomonadota</taxon>
        <taxon>Gammaproteobacteria</taxon>
        <taxon>Lysobacterales</taxon>
        <taxon>Lysobacteraceae</taxon>
        <taxon>Stenotrophomonas</taxon>
        <taxon>Stenotrophomonas maltophilia group</taxon>
    </lineage>
</organism>
<keyword id="KW-0028">Amino-acid biosynthesis</keyword>
<keyword id="KW-0055">Arginine biosynthesis</keyword>
<keyword id="KW-0963">Cytoplasm</keyword>
<keyword id="KW-0456">Lyase</keyword>
<gene>
    <name evidence="1" type="primary">argH</name>
    <name type="ordered locus">Smal_2723</name>
</gene>
<feature type="chain" id="PRO_1000089120" description="Argininosuccinate lyase">
    <location>
        <begin position="1"/>
        <end position="431"/>
    </location>
</feature>
<name>ARLY_STRM5</name>
<evidence type="ECO:0000255" key="1">
    <source>
        <dbReference type="HAMAP-Rule" id="MF_00006"/>
    </source>
</evidence>
<dbReference type="EC" id="4.3.2.1" evidence="1"/>
<dbReference type="EMBL" id="CP001111">
    <property type="protein sequence ID" value="ACF52423.1"/>
    <property type="molecule type" value="Genomic_DNA"/>
</dbReference>
<dbReference type="RefSeq" id="WP_012511640.1">
    <property type="nucleotide sequence ID" value="NC_011071.1"/>
</dbReference>
<dbReference type="SMR" id="B4SQ92"/>
<dbReference type="STRING" id="391008.Smal_2723"/>
<dbReference type="KEGG" id="smt:Smal_2723"/>
<dbReference type="eggNOG" id="COG0165">
    <property type="taxonomic scope" value="Bacteria"/>
</dbReference>
<dbReference type="HOGENOM" id="CLU_027272_2_0_6"/>
<dbReference type="OrthoDB" id="9769623at2"/>
<dbReference type="UniPathway" id="UPA00068">
    <property type="reaction ID" value="UER00114"/>
</dbReference>
<dbReference type="Proteomes" id="UP000001867">
    <property type="component" value="Chromosome"/>
</dbReference>
<dbReference type="GO" id="GO:0005829">
    <property type="term" value="C:cytosol"/>
    <property type="evidence" value="ECO:0007669"/>
    <property type="project" value="TreeGrafter"/>
</dbReference>
<dbReference type="GO" id="GO:0004056">
    <property type="term" value="F:argininosuccinate lyase activity"/>
    <property type="evidence" value="ECO:0007669"/>
    <property type="project" value="UniProtKB-UniRule"/>
</dbReference>
<dbReference type="GO" id="GO:0042450">
    <property type="term" value="P:arginine biosynthetic process via ornithine"/>
    <property type="evidence" value="ECO:0007669"/>
    <property type="project" value="InterPro"/>
</dbReference>
<dbReference type="GO" id="GO:0006526">
    <property type="term" value="P:L-arginine biosynthetic process"/>
    <property type="evidence" value="ECO:0007669"/>
    <property type="project" value="UniProtKB-UniRule"/>
</dbReference>
<dbReference type="Gene3D" id="1.10.40.30">
    <property type="entry name" value="Fumarase/aspartase (C-terminal domain)"/>
    <property type="match status" value="1"/>
</dbReference>
<dbReference type="Gene3D" id="1.20.200.10">
    <property type="entry name" value="Fumarase/aspartase (Central domain)"/>
    <property type="match status" value="1"/>
</dbReference>
<dbReference type="Gene3D" id="1.10.275.10">
    <property type="entry name" value="Fumarase/aspartase (N-terminal domain)"/>
    <property type="match status" value="1"/>
</dbReference>
<dbReference type="HAMAP" id="MF_00006">
    <property type="entry name" value="Arg_succ_lyase"/>
    <property type="match status" value="1"/>
</dbReference>
<dbReference type="InterPro" id="IPR009049">
    <property type="entry name" value="Argininosuccinate_lyase"/>
</dbReference>
<dbReference type="InterPro" id="IPR024083">
    <property type="entry name" value="Fumarase/histidase_N"/>
</dbReference>
<dbReference type="InterPro" id="IPR020557">
    <property type="entry name" value="Fumarate_lyase_CS"/>
</dbReference>
<dbReference type="InterPro" id="IPR000362">
    <property type="entry name" value="Fumarate_lyase_fam"/>
</dbReference>
<dbReference type="InterPro" id="IPR022761">
    <property type="entry name" value="Fumarate_lyase_N"/>
</dbReference>
<dbReference type="InterPro" id="IPR008948">
    <property type="entry name" value="L-Aspartase-like"/>
</dbReference>
<dbReference type="NCBIfam" id="TIGR00838">
    <property type="entry name" value="argH"/>
    <property type="match status" value="1"/>
</dbReference>
<dbReference type="PANTHER" id="PTHR43814">
    <property type="entry name" value="ARGININOSUCCINATE LYASE"/>
    <property type="match status" value="1"/>
</dbReference>
<dbReference type="PANTHER" id="PTHR43814:SF1">
    <property type="entry name" value="ARGININOSUCCINATE LYASE"/>
    <property type="match status" value="1"/>
</dbReference>
<dbReference type="Pfam" id="PF00206">
    <property type="entry name" value="Lyase_1"/>
    <property type="match status" value="1"/>
</dbReference>
<dbReference type="PRINTS" id="PR00145">
    <property type="entry name" value="ARGSUCLYASE"/>
</dbReference>
<dbReference type="PRINTS" id="PR00149">
    <property type="entry name" value="FUMRATELYASE"/>
</dbReference>
<dbReference type="SUPFAM" id="SSF48557">
    <property type="entry name" value="L-aspartase-like"/>
    <property type="match status" value="1"/>
</dbReference>
<dbReference type="PROSITE" id="PS00163">
    <property type="entry name" value="FUMARATE_LYASES"/>
    <property type="match status" value="1"/>
</dbReference>
<reference key="1">
    <citation type="submission" date="2008-06" db="EMBL/GenBank/DDBJ databases">
        <title>Complete sequence of Stenotrophomonas maltophilia R551-3.</title>
        <authorList>
            <consortium name="US DOE Joint Genome Institute"/>
            <person name="Lucas S."/>
            <person name="Copeland A."/>
            <person name="Lapidus A."/>
            <person name="Glavina del Rio T."/>
            <person name="Dalin E."/>
            <person name="Tice H."/>
            <person name="Pitluck S."/>
            <person name="Chain P."/>
            <person name="Malfatti S."/>
            <person name="Shin M."/>
            <person name="Vergez L."/>
            <person name="Lang D."/>
            <person name="Schmutz J."/>
            <person name="Larimer F."/>
            <person name="Land M."/>
            <person name="Hauser L."/>
            <person name="Kyrpides N."/>
            <person name="Mikhailova N."/>
            <person name="Taghavi S."/>
            <person name="Monchy S."/>
            <person name="Newman L."/>
            <person name="Vangronsveld J."/>
            <person name="van der Lelie D."/>
            <person name="Richardson P."/>
        </authorList>
    </citation>
    <scope>NUCLEOTIDE SEQUENCE [LARGE SCALE GENOMIC DNA]</scope>
    <source>
        <strain>R551-3</strain>
    </source>
</reference>
<sequence>MADLLWQKPGVAVDAKIQTFLAGDDVILDREFFLHDIAASAAHAQGLQHIGILSADELAGLLRELDVLAQDFRAGRFVLDTQYEDGHSAIEARLTERLGDAGRKIHTGRSRNDQILVATRLWLKEKLQRVAQLSAEVAKVALDRAQAEKDLPIPGYTHIQRAVVSSAGMWWAGWAEAFIDNAIRARDTHALVDANPLGTAAGYGVNLPLDREHTTAALGFARMQISPIYAQLSRGKFELAALEALGAATLDLRRIAWDLSLFTSAEFGFVALPAQYTTGSSIMPNKRNPDVIELMRATHASVAAARTEIEQLLSLPSGYHRDLQSSKGAIFHGFGRGLAALELLPSLLANLEWRDDKLRAAIDSGMYATDVAVEAAVAGVPFREAYKAAAAGADSAGQGRTPEGSLAARVSPGSAADLRLDELRARWQALS</sequence>
<protein>
    <recommendedName>
        <fullName evidence="1">Argininosuccinate lyase</fullName>
        <shortName evidence="1">ASAL</shortName>
        <ecNumber evidence="1">4.3.2.1</ecNumber>
    </recommendedName>
    <alternativeName>
        <fullName evidence="1">Arginosuccinase</fullName>
    </alternativeName>
</protein>
<accession>B4SQ92</accession>
<comment type="catalytic activity">
    <reaction evidence="1">
        <text>2-(N(omega)-L-arginino)succinate = fumarate + L-arginine</text>
        <dbReference type="Rhea" id="RHEA:24020"/>
        <dbReference type="ChEBI" id="CHEBI:29806"/>
        <dbReference type="ChEBI" id="CHEBI:32682"/>
        <dbReference type="ChEBI" id="CHEBI:57472"/>
        <dbReference type="EC" id="4.3.2.1"/>
    </reaction>
</comment>
<comment type="pathway">
    <text evidence="1">Amino-acid biosynthesis; L-arginine biosynthesis; L-arginine from L-ornithine and carbamoyl phosphate: step 3/3.</text>
</comment>
<comment type="subcellular location">
    <subcellularLocation>
        <location evidence="1">Cytoplasm</location>
    </subcellularLocation>
</comment>
<comment type="similarity">
    <text evidence="1">Belongs to the lyase 1 family. Argininosuccinate lyase subfamily.</text>
</comment>